<name>RL15_STRE4</name>
<organism>
    <name type="scientific">Streptococcus equi subsp. equi (strain 4047)</name>
    <dbReference type="NCBI Taxonomy" id="553482"/>
    <lineage>
        <taxon>Bacteria</taxon>
        <taxon>Bacillati</taxon>
        <taxon>Bacillota</taxon>
        <taxon>Bacilli</taxon>
        <taxon>Lactobacillales</taxon>
        <taxon>Streptococcaceae</taxon>
        <taxon>Streptococcus</taxon>
    </lineage>
</organism>
<protein>
    <recommendedName>
        <fullName evidence="1">Large ribosomal subunit protein uL15</fullName>
    </recommendedName>
    <alternativeName>
        <fullName evidence="3">50S ribosomal protein L15</fullName>
    </alternativeName>
</protein>
<keyword id="KW-0687">Ribonucleoprotein</keyword>
<keyword id="KW-0689">Ribosomal protein</keyword>
<keyword id="KW-0694">RNA-binding</keyword>
<keyword id="KW-0699">rRNA-binding</keyword>
<proteinExistence type="inferred from homology"/>
<feature type="chain" id="PRO_1000166314" description="Large ribosomal subunit protein uL15">
    <location>
        <begin position="1"/>
        <end position="146"/>
    </location>
</feature>
<feature type="region of interest" description="Disordered" evidence="2">
    <location>
        <begin position="1"/>
        <end position="51"/>
    </location>
</feature>
<feature type="compositionally biased region" description="Basic residues" evidence="2">
    <location>
        <begin position="10"/>
        <end position="19"/>
    </location>
</feature>
<feature type="compositionally biased region" description="Gly residues" evidence="2">
    <location>
        <begin position="23"/>
        <end position="35"/>
    </location>
</feature>
<feature type="compositionally biased region" description="Gly residues" evidence="2">
    <location>
        <begin position="42"/>
        <end position="51"/>
    </location>
</feature>
<reference key="1">
    <citation type="journal article" date="2009" name="PLoS Pathog.">
        <title>Genomic evidence for the evolution of Streptococcus equi: host restriction, increased virulence, and genetic exchange with human pathogens.</title>
        <authorList>
            <person name="Holden M.T.G."/>
            <person name="Heather Z."/>
            <person name="Paillot R."/>
            <person name="Steward K.F."/>
            <person name="Webb K."/>
            <person name="Ainslie F."/>
            <person name="Jourdan T."/>
            <person name="Bason N.C."/>
            <person name="Holroyd N.E."/>
            <person name="Mungall K."/>
            <person name="Quail M.A."/>
            <person name="Sanders M."/>
            <person name="Simmonds M."/>
            <person name="Willey D."/>
            <person name="Brooks K."/>
            <person name="Aanensen D.M."/>
            <person name="Spratt B.G."/>
            <person name="Jolley K.A."/>
            <person name="Maiden M.C.J."/>
            <person name="Kehoe M."/>
            <person name="Chanter N."/>
            <person name="Bentley S.D."/>
            <person name="Robinson C."/>
            <person name="Maskell D.J."/>
            <person name="Parkhill J."/>
            <person name="Waller A.S."/>
        </authorList>
    </citation>
    <scope>NUCLEOTIDE SEQUENCE [LARGE SCALE GENOMIC DNA]</scope>
    <source>
        <strain>4047</strain>
    </source>
</reference>
<accession>C0MBW6</accession>
<comment type="function">
    <text evidence="1">Binds to the 23S rRNA.</text>
</comment>
<comment type="subunit">
    <text evidence="1">Part of the 50S ribosomal subunit.</text>
</comment>
<comment type="similarity">
    <text evidence="1">Belongs to the universal ribosomal protein uL15 family.</text>
</comment>
<gene>
    <name evidence="1" type="primary">rplO</name>
    <name type="ordered locus">SEQ_0074</name>
</gene>
<evidence type="ECO:0000255" key="1">
    <source>
        <dbReference type="HAMAP-Rule" id="MF_01341"/>
    </source>
</evidence>
<evidence type="ECO:0000256" key="2">
    <source>
        <dbReference type="SAM" id="MobiDB-lite"/>
    </source>
</evidence>
<evidence type="ECO:0000305" key="3"/>
<sequence>MKLHELKPAKGSRKVRNRVGRGTSSGNGKTSGRGQKGQKARSGGGVRLGFEGGQTPLFRRIPKRGFTNINTKEYALVNLDQLNAFEDGTEVTPVVLKEAGIVRAEKSGVKILGNGELTKKLTVKAAKFSKSAEAAITAKGGSIEVI</sequence>
<dbReference type="EMBL" id="FM204883">
    <property type="protein sequence ID" value="CAW92002.1"/>
    <property type="molecule type" value="Genomic_DNA"/>
</dbReference>
<dbReference type="RefSeq" id="WP_012514746.1">
    <property type="nucleotide sequence ID" value="NC_012471.1"/>
</dbReference>
<dbReference type="SMR" id="C0MBW6"/>
<dbReference type="GeneID" id="83703923"/>
<dbReference type="KEGG" id="seu:SEQ_0074"/>
<dbReference type="HOGENOM" id="CLU_055188_4_2_9"/>
<dbReference type="OrthoDB" id="9810293at2"/>
<dbReference type="Proteomes" id="UP000001365">
    <property type="component" value="Chromosome"/>
</dbReference>
<dbReference type="GO" id="GO:0022625">
    <property type="term" value="C:cytosolic large ribosomal subunit"/>
    <property type="evidence" value="ECO:0007669"/>
    <property type="project" value="TreeGrafter"/>
</dbReference>
<dbReference type="GO" id="GO:0019843">
    <property type="term" value="F:rRNA binding"/>
    <property type="evidence" value="ECO:0007669"/>
    <property type="project" value="UniProtKB-UniRule"/>
</dbReference>
<dbReference type="GO" id="GO:0003735">
    <property type="term" value="F:structural constituent of ribosome"/>
    <property type="evidence" value="ECO:0007669"/>
    <property type="project" value="InterPro"/>
</dbReference>
<dbReference type="GO" id="GO:0006412">
    <property type="term" value="P:translation"/>
    <property type="evidence" value="ECO:0007669"/>
    <property type="project" value="UniProtKB-UniRule"/>
</dbReference>
<dbReference type="FunFam" id="3.100.10.10:FF:000004">
    <property type="entry name" value="50S ribosomal protein L15"/>
    <property type="match status" value="1"/>
</dbReference>
<dbReference type="Gene3D" id="3.100.10.10">
    <property type="match status" value="1"/>
</dbReference>
<dbReference type="HAMAP" id="MF_01341">
    <property type="entry name" value="Ribosomal_uL15"/>
    <property type="match status" value="1"/>
</dbReference>
<dbReference type="InterPro" id="IPR030878">
    <property type="entry name" value="Ribosomal_uL15"/>
</dbReference>
<dbReference type="InterPro" id="IPR021131">
    <property type="entry name" value="Ribosomal_uL15/eL18"/>
</dbReference>
<dbReference type="InterPro" id="IPR036227">
    <property type="entry name" value="Ribosomal_uL15/eL18_sf"/>
</dbReference>
<dbReference type="InterPro" id="IPR005749">
    <property type="entry name" value="Ribosomal_uL15_bac-type"/>
</dbReference>
<dbReference type="InterPro" id="IPR001196">
    <property type="entry name" value="Ribosomal_uL15_CS"/>
</dbReference>
<dbReference type="NCBIfam" id="TIGR01071">
    <property type="entry name" value="rplO_bact"/>
    <property type="match status" value="1"/>
</dbReference>
<dbReference type="PANTHER" id="PTHR12934">
    <property type="entry name" value="50S RIBOSOMAL PROTEIN L15"/>
    <property type="match status" value="1"/>
</dbReference>
<dbReference type="PANTHER" id="PTHR12934:SF11">
    <property type="entry name" value="LARGE RIBOSOMAL SUBUNIT PROTEIN UL15M"/>
    <property type="match status" value="1"/>
</dbReference>
<dbReference type="Pfam" id="PF00828">
    <property type="entry name" value="Ribosomal_L27A"/>
    <property type="match status" value="1"/>
</dbReference>
<dbReference type="SUPFAM" id="SSF52080">
    <property type="entry name" value="Ribosomal proteins L15p and L18e"/>
    <property type="match status" value="1"/>
</dbReference>
<dbReference type="PROSITE" id="PS00475">
    <property type="entry name" value="RIBOSOMAL_L15"/>
    <property type="match status" value="1"/>
</dbReference>